<evidence type="ECO:0000250" key="1"/>
<evidence type="ECO:0000255" key="2"/>
<evidence type="ECO:0000305" key="3"/>
<sequence>MRAIISLLLISAMVFSMIEAVPVEEGLQLFEGERGGCLPRNKFCNPSSGPRCCSGLTCKELNIWASKCL</sequence>
<organism>
    <name type="scientific">Agelena orientalis</name>
    <name type="common">Funnel-web spider</name>
    <dbReference type="NCBI Taxonomy" id="293813"/>
    <lineage>
        <taxon>Eukaryota</taxon>
        <taxon>Metazoa</taxon>
        <taxon>Ecdysozoa</taxon>
        <taxon>Arthropoda</taxon>
        <taxon>Chelicerata</taxon>
        <taxon>Arachnida</taxon>
        <taxon>Araneae</taxon>
        <taxon>Araneomorphae</taxon>
        <taxon>Entelegynae</taxon>
        <taxon>Agelenidae</taxon>
        <taxon>Agelena</taxon>
    </lineage>
</organism>
<comment type="function">
    <text evidence="1">Insect active toxin causing rapid but reversible paralysis in crickets. No activity shown in mammals. Does not show effect on mammalian voltage-gated calcium channels (By similarity).</text>
</comment>
<comment type="subcellular location">
    <subcellularLocation>
        <location evidence="1">Secreted</location>
    </subcellularLocation>
</comment>
<comment type="tissue specificity">
    <text>Expressed by the venom gland.</text>
</comment>
<comment type="domain">
    <text evidence="1">The presence of a 'disulfide through disulfide knot' structurally defines this protein as a knottin.</text>
</comment>
<comment type="similarity">
    <text evidence="3">Belongs to the neurotoxin 01 (U2-agtx) family.</text>
</comment>
<proteinExistence type="evidence at transcript level"/>
<name>TAG2W_AGEOR</name>
<reference key="1">
    <citation type="journal article" date="2005" name="Proteins">
        <title>A novel strategy for the identification of toxinlike structures in spider venom.</title>
        <authorList>
            <person name="Kozlov S.A."/>
            <person name="Malyavka A."/>
            <person name="McCutchen B."/>
            <person name="Lu A."/>
            <person name="Schepers E."/>
            <person name="Herrmann R."/>
            <person name="Grishin E.V."/>
        </authorList>
    </citation>
    <scope>NUCLEOTIDE SEQUENCE [MRNA]</scope>
    <source>
        <tissue>Venom gland</tissue>
    </source>
</reference>
<protein>
    <recommendedName>
        <fullName>U2-agatoxin-Ao1w</fullName>
        <shortName>U2-AGTX-Ao1w</shortName>
    </recommendedName>
    <alternativeName>
        <fullName>Agel_22</fullName>
    </alternativeName>
</protein>
<keyword id="KW-1015">Disulfide bond</keyword>
<keyword id="KW-0960">Knottin</keyword>
<keyword id="KW-0528">Neurotoxin</keyword>
<keyword id="KW-0964">Secreted</keyword>
<keyword id="KW-0732">Signal</keyword>
<keyword id="KW-0800">Toxin</keyword>
<accession>Q5Y4W5</accession>
<feature type="signal peptide" evidence="2">
    <location>
        <begin position="1"/>
        <end position="20"/>
    </location>
</feature>
<feature type="propeptide" id="PRO_5000093641" evidence="2">
    <location>
        <begin position="21"/>
        <end position="34"/>
    </location>
</feature>
<feature type="chain" id="PRO_5000093642" description="U2-agatoxin-Ao1w">
    <location>
        <begin position="35"/>
        <end position="69"/>
    </location>
</feature>
<feature type="disulfide bond" evidence="1">
    <location>
        <begin position="37"/>
        <end position="53"/>
    </location>
</feature>
<feature type="disulfide bond" evidence="1">
    <location>
        <begin position="44"/>
        <end position="58"/>
    </location>
</feature>
<feature type="disulfide bond" evidence="1">
    <location>
        <begin position="52"/>
        <end position="68"/>
    </location>
</feature>
<dbReference type="EMBL" id="AY681319">
    <property type="protein sequence ID" value="AAU93675.1"/>
    <property type="molecule type" value="mRNA"/>
</dbReference>
<dbReference type="SMR" id="Q5Y4W5"/>
<dbReference type="ArachnoServer" id="AS000093">
    <property type="toxin name" value="U2-agatoxin-Ao1w"/>
</dbReference>
<dbReference type="GO" id="GO:0005576">
    <property type="term" value="C:extracellular region"/>
    <property type="evidence" value="ECO:0007669"/>
    <property type="project" value="UniProtKB-SubCell"/>
</dbReference>
<dbReference type="GO" id="GO:0090729">
    <property type="term" value="F:toxin activity"/>
    <property type="evidence" value="ECO:0007669"/>
    <property type="project" value="UniProtKB-KW"/>
</dbReference>
<dbReference type="Pfam" id="PF05980">
    <property type="entry name" value="Toxin_7"/>
    <property type="match status" value="1"/>
</dbReference>
<dbReference type="SUPFAM" id="SSF57059">
    <property type="entry name" value="omega toxin-like"/>
    <property type="match status" value="1"/>
</dbReference>